<gene>
    <name evidence="1" type="primary">clpX</name>
    <name type="ordered locus">Lreu_0653</name>
</gene>
<proteinExistence type="inferred from homology"/>
<feature type="chain" id="PRO_1000058342" description="ATP-dependent Clp protease ATP-binding subunit ClpX">
    <location>
        <begin position="1"/>
        <end position="416"/>
    </location>
</feature>
<feature type="domain" description="ClpX-type ZB" evidence="2">
    <location>
        <begin position="1"/>
        <end position="54"/>
    </location>
</feature>
<feature type="binding site" evidence="2">
    <location>
        <position position="13"/>
    </location>
    <ligand>
        <name>Zn(2+)</name>
        <dbReference type="ChEBI" id="CHEBI:29105"/>
    </ligand>
</feature>
<feature type="binding site" evidence="2">
    <location>
        <position position="16"/>
    </location>
    <ligand>
        <name>Zn(2+)</name>
        <dbReference type="ChEBI" id="CHEBI:29105"/>
    </ligand>
</feature>
<feature type="binding site" evidence="2">
    <location>
        <position position="35"/>
    </location>
    <ligand>
        <name>Zn(2+)</name>
        <dbReference type="ChEBI" id="CHEBI:29105"/>
    </ligand>
</feature>
<feature type="binding site" evidence="2">
    <location>
        <position position="38"/>
    </location>
    <ligand>
        <name>Zn(2+)</name>
        <dbReference type="ChEBI" id="CHEBI:29105"/>
    </ligand>
</feature>
<feature type="binding site" evidence="1">
    <location>
        <begin position="119"/>
        <end position="126"/>
    </location>
    <ligand>
        <name>ATP</name>
        <dbReference type="ChEBI" id="CHEBI:30616"/>
    </ligand>
</feature>
<evidence type="ECO:0000255" key="1">
    <source>
        <dbReference type="HAMAP-Rule" id="MF_00175"/>
    </source>
</evidence>
<evidence type="ECO:0000255" key="2">
    <source>
        <dbReference type="PROSITE-ProRule" id="PRU01250"/>
    </source>
</evidence>
<comment type="function">
    <text evidence="1">ATP-dependent specificity component of the Clp protease. It directs the protease to specific substrates. Can perform chaperone functions in the absence of ClpP.</text>
</comment>
<comment type="subunit">
    <text evidence="1">Component of the ClpX-ClpP complex. Forms a hexameric ring that, in the presence of ATP, binds to fourteen ClpP subunits assembled into a disk-like structure with a central cavity, resembling the structure of eukaryotic proteasomes.</text>
</comment>
<comment type="similarity">
    <text evidence="1">Belongs to the ClpX chaperone family.</text>
</comment>
<keyword id="KW-0067">ATP-binding</keyword>
<keyword id="KW-0143">Chaperone</keyword>
<keyword id="KW-0479">Metal-binding</keyword>
<keyword id="KW-0547">Nucleotide-binding</keyword>
<keyword id="KW-1185">Reference proteome</keyword>
<keyword id="KW-0862">Zinc</keyword>
<name>CLPX_LIMRD</name>
<organism>
    <name type="scientific">Limosilactobacillus reuteri (strain DSM 20016)</name>
    <name type="common">Lactobacillus reuteri</name>
    <dbReference type="NCBI Taxonomy" id="557436"/>
    <lineage>
        <taxon>Bacteria</taxon>
        <taxon>Bacillati</taxon>
        <taxon>Bacillota</taxon>
        <taxon>Bacilli</taxon>
        <taxon>Lactobacillales</taxon>
        <taxon>Lactobacillaceae</taxon>
        <taxon>Limosilactobacillus</taxon>
    </lineage>
</organism>
<accession>A5VJ94</accession>
<dbReference type="EMBL" id="CP000705">
    <property type="protein sequence ID" value="ABQ82918.1"/>
    <property type="molecule type" value="Genomic_DNA"/>
</dbReference>
<dbReference type="RefSeq" id="WP_003666838.1">
    <property type="nucleotide sequence ID" value="NZ_AZDD01000002.1"/>
</dbReference>
<dbReference type="SMR" id="A5VJ94"/>
<dbReference type="STRING" id="557436.Lreu_0653"/>
<dbReference type="GeneID" id="77190800"/>
<dbReference type="KEGG" id="lre:Lreu_0653"/>
<dbReference type="PATRIC" id="fig|557436.17.peg.725"/>
<dbReference type="eggNOG" id="COG1219">
    <property type="taxonomic scope" value="Bacteria"/>
</dbReference>
<dbReference type="HOGENOM" id="CLU_014218_8_2_9"/>
<dbReference type="Proteomes" id="UP000001991">
    <property type="component" value="Chromosome"/>
</dbReference>
<dbReference type="GO" id="GO:0009376">
    <property type="term" value="C:HslUV protease complex"/>
    <property type="evidence" value="ECO:0007669"/>
    <property type="project" value="TreeGrafter"/>
</dbReference>
<dbReference type="GO" id="GO:0005524">
    <property type="term" value="F:ATP binding"/>
    <property type="evidence" value="ECO:0007669"/>
    <property type="project" value="UniProtKB-UniRule"/>
</dbReference>
<dbReference type="GO" id="GO:0016887">
    <property type="term" value="F:ATP hydrolysis activity"/>
    <property type="evidence" value="ECO:0007669"/>
    <property type="project" value="InterPro"/>
</dbReference>
<dbReference type="GO" id="GO:0140662">
    <property type="term" value="F:ATP-dependent protein folding chaperone"/>
    <property type="evidence" value="ECO:0007669"/>
    <property type="project" value="InterPro"/>
</dbReference>
<dbReference type="GO" id="GO:0046983">
    <property type="term" value="F:protein dimerization activity"/>
    <property type="evidence" value="ECO:0007669"/>
    <property type="project" value="InterPro"/>
</dbReference>
<dbReference type="GO" id="GO:0051082">
    <property type="term" value="F:unfolded protein binding"/>
    <property type="evidence" value="ECO:0007669"/>
    <property type="project" value="UniProtKB-UniRule"/>
</dbReference>
<dbReference type="GO" id="GO:0008270">
    <property type="term" value="F:zinc ion binding"/>
    <property type="evidence" value="ECO:0007669"/>
    <property type="project" value="InterPro"/>
</dbReference>
<dbReference type="GO" id="GO:0051301">
    <property type="term" value="P:cell division"/>
    <property type="evidence" value="ECO:0007669"/>
    <property type="project" value="TreeGrafter"/>
</dbReference>
<dbReference type="GO" id="GO:0051603">
    <property type="term" value="P:proteolysis involved in protein catabolic process"/>
    <property type="evidence" value="ECO:0007669"/>
    <property type="project" value="TreeGrafter"/>
</dbReference>
<dbReference type="CDD" id="cd19497">
    <property type="entry name" value="RecA-like_ClpX"/>
    <property type="match status" value="1"/>
</dbReference>
<dbReference type="FunFam" id="1.10.8.60:FF:000002">
    <property type="entry name" value="ATP-dependent Clp protease ATP-binding subunit ClpX"/>
    <property type="match status" value="1"/>
</dbReference>
<dbReference type="FunFam" id="3.40.50.300:FF:000005">
    <property type="entry name" value="ATP-dependent Clp protease ATP-binding subunit ClpX"/>
    <property type="match status" value="1"/>
</dbReference>
<dbReference type="Gene3D" id="1.10.8.60">
    <property type="match status" value="1"/>
</dbReference>
<dbReference type="Gene3D" id="6.20.220.10">
    <property type="entry name" value="ClpX chaperone, C4-type zinc finger domain"/>
    <property type="match status" value="1"/>
</dbReference>
<dbReference type="Gene3D" id="3.40.50.300">
    <property type="entry name" value="P-loop containing nucleotide triphosphate hydrolases"/>
    <property type="match status" value="1"/>
</dbReference>
<dbReference type="HAMAP" id="MF_00175">
    <property type="entry name" value="ClpX"/>
    <property type="match status" value="1"/>
</dbReference>
<dbReference type="InterPro" id="IPR003593">
    <property type="entry name" value="AAA+_ATPase"/>
</dbReference>
<dbReference type="InterPro" id="IPR050052">
    <property type="entry name" value="ATP-dep_Clp_protease_ClpX"/>
</dbReference>
<dbReference type="InterPro" id="IPR003959">
    <property type="entry name" value="ATPase_AAA_core"/>
</dbReference>
<dbReference type="InterPro" id="IPR019489">
    <property type="entry name" value="Clp_ATPase_C"/>
</dbReference>
<dbReference type="InterPro" id="IPR004487">
    <property type="entry name" value="Clp_protease_ATP-bd_su_ClpX"/>
</dbReference>
<dbReference type="InterPro" id="IPR046425">
    <property type="entry name" value="ClpX_bact"/>
</dbReference>
<dbReference type="InterPro" id="IPR027417">
    <property type="entry name" value="P-loop_NTPase"/>
</dbReference>
<dbReference type="InterPro" id="IPR010603">
    <property type="entry name" value="Znf_CppX_C4"/>
</dbReference>
<dbReference type="InterPro" id="IPR038366">
    <property type="entry name" value="Znf_CppX_C4_sf"/>
</dbReference>
<dbReference type="NCBIfam" id="TIGR00382">
    <property type="entry name" value="clpX"/>
    <property type="match status" value="1"/>
</dbReference>
<dbReference type="NCBIfam" id="NF003745">
    <property type="entry name" value="PRK05342.1"/>
    <property type="match status" value="1"/>
</dbReference>
<dbReference type="PANTHER" id="PTHR48102:SF7">
    <property type="entry name" value="ATP-DEPENDENT CLP PROTEASE ATP-BINDING SUBUNIT CLPX-LIKE, MITOCHONDRIAL"/>
    <property type="match status" value="1"/>
</dbReference>
<dbReference type="PANTHER" id="PTHR48102">
    <property type="entry name" value="ATP-DEPENDENT CLP PROTEASE ATP-BINDING SUBUNIT CLPX-LIKE, MITOCHONDRIAL-RELATED"/>
    <property type="match status" value="1"/>
</dbReference>
<dbReference type="Pfam" id="PF07724">
    <property type="entry name" value="AAA_2"/>
    <property type="match status" value="1"/>
</dbReference>
<dbReference type="Pfam" id="PF10431">
    <property type="entry name" value="ClpB_D2-small"/>
    <property type="match status" value="1"/>
</dbReference>
<dbReference type="Pfam" id="PF06689">
    <property type="entry name" value="zf-C4_ClpX"/>
    <property type="match status" value="1"/>
</dbReference>
<dbReference type="SMART" id="SM00382">
    <property type="entry name" value="AAA"/>
    <property type="match status" value="1"/>
</dbReference>
<dbReference type="SMART" id="SM01086">
    <property type="entry name" value="ClpB_D2-small"/>
    <property type="match status" value="1"/>
</dbReference>
<dbReference type="SMART" id="SM00994">
    <property type="entry name" value="zf-C4_ClpX"/>
    <property type="match status" value="1"/>
</dbReference>
<dbReference type="SUPFAM" id="SSF57716">
    <property type="entry name" value="Glucocorticoid receptor-like (DNA-binding domain)"/>
    <property type="match status" value="1"/>
</dbReference>
<dbReference type="SUPFAM" id="SSF52540">
    <property type="entry name" value="P-loop containing nucleoside triphosphate hydrolases"/>
    <property type="match status" value="1"/>
</dbReference>
<dbReference type="PROSITE" id="PS51902">
    <property type="entry name" value="CLPX_ZB"/>
    <property type="match status" value="1"/>
</dbReference>
<sequence length="416" mass="45970">MFEDTTGMDSVHCSFCGKSQDEVKKIVAGPGVYICNECVDLCKQIIDQELAEDEAKKAFRVPTPGEIVNELDDYVIGQGDAKKTLAVAVYNHYKRVNAMMSGDNNDTELQKSNIAVIGPTGSGKTYLAQSLARILNVPFAIADATTLTEAGYVGEDVENIILKLLQAADFDVERAEKGIIYIDEIDKIAKKSENVSITRDVSGEGVQQALLKILEGTIANVPPQGGRKHPQQEFIQVDTKNILFIVGGAFDGIETIVKERLGDKTIGFGTDSREAEEVTDKNILQHVIPEDLLKFGLIPEFIGRLPVMTALEKLDEDDLVRILTEPKNALVKQYQELIRLDGSQLTFTDGALRAMAQLAIKRNTGARGLRSIIEDVMRDVMFDLPSRKDVEKVIIDKRCVTQHTEPRYVLKDEKAS</sequence>
<protein>
    <recommendedName>
        <fullName evidence="1">ATP-dependent Clp protease ATP-binding subunit ClpX</fullName>
    </recommendedName>
</protein>
<reference key="1">
    <citation type="journal article" date="2011" name="PLoS Genet.">
        <title>The evolution of host specialization in the vertebrate gut symbiont Lactobacillus reuteri.</title>
        <authorList>
            <person name="Frese S.A."/>
            <person name="Benson A.K."/>
            <person name="Tannock G.W."/>
            <person name="Loach D.M."/>
            <person name="Kim J."/>
            <person name="Zhang M."/>
            <person name="Oh P.L."/>
            <person name="Heng N.C."/>
            <person name="Patil P.B."/>
            <person name="Juge N."/>
            <person name="Mackenzie D.A."/>
            <person name="Pearson B.M."/>
            <person name="Lapidus A."/>
            <person name="Dalin E."/>
            <person name="Tice H."/>
            <person name="Goltsman E."/>
            <person name="Land M."/>
            <person name="Hauser L."/>
            <person name="Ivanova N."/>
            <person name="Kyrpides N.C."/>
            <person name="Walter J."/>
        </authorList>
    </citation>
    <scope>NUCLEOTIDE SEQUENCE [LARGE SCALE GENOMIC DNA]</scope>
    <source>
        <strain>DSM 20016</strain>
    </source>
</reference>